<reference key="1">
    <citation type="submission" date="2003-03" db="EMBL/GenBank/DDBJ databases">
        <title>African swine fever virus genomes.</title>
        <authorList>
            <person name="Kutish G.F."/>
            <person name="Rock D.L."/>
        </authorList>
    </citation>
    <scope>NUCLEOTIDE SEQUENCE [LARGE SCALE GENOMIC DNA]</scope>
</reference>
<accession>P0C9V6</accession>
<gene>
    <name type="ordered locus">War-068</name>
</gene>
<evidence type="ECO:0000250" key="1">
    <source>
        <dbReference type="UniProtKB" id="P06729"/>
    </source>
</evidence>
<evidence type="ECO:0000250" key="2">
    <source>
        <dbReference type="UniProtKB" id="P0C9V9"/>
    </source>
</evidence>
<evidence type="ECO:0000250" key="3">
    <source>
        <dbReference type="UniProtKB" id="Q89501"/>
    </source>
</evidence>
<evidence type="ECO:0000255" key="4"/>
<evidence type="ECO:0000256" key="5">
    <source>
        <dbReference type="SAM" id="MobiDB-lite"/>
    </source>
</evidence>
<evidence type="ECO:0000305" key="6"/>
<feature type="signal peptide" evidence="4">
    <location>
        <begin position="1"/>
        <end position="16"/>
    </location>
</feature>
<feature type="chain" id="PRO_0000373359" description="CD2 homolog">
    <location>
        <begin position="17"/>
        <end position="381"/>
    </location>
</feature>
<feature type="topological domain" description="Extracellular" evidence="4">
    <location>
        <begin position="17"/>
        <end position="208"/>
    </location>
</feature>
<feature type="transmembrane region" description="Helical" evidence="4">
    <location>
        <begin position="209"/>
        <end position="229"/>
    </location>
</feature>
<feature type="topological domain" description="Cytoplasmic" evidence="4">
    <location>
        <begin position="230"/>
        <end position="381"/>
    </location>
</feature>
<feature type="repeat" description="1">
    <location>
        <begin position="305"/>
        <end position="310"/>
    </location>
</feature>
<feature type="repeat" description="2">
    <location>
        <begin position="311"/>
        <end position="316"/>
    </location>
</feature>
<feature type="repeat" description="3">
    <location>
        <begin position="317"/>
        <end position="322"/>
    </location>
</feature>
<feature type="repeat" description="4">
    <location>
        <begin position="323"/>
        <end position="328"/>
    </location>
</feature>
<feature type="repeat" description="5">
    <location>
        <begin position="329"/>
        <end position="334"/>
    </location>
</feature>
<feature type="repeat" description="6">
    <location>
        <begin position="335"/>
        <end position="340"/>
    </location>
</feature>
<feature type="repeat" description="7">
    <location>
        <begin position="341"/>
        <end position="346"/>
    </location>
</feature>
<feature type="region of interest" description="Disordered" evidence="5">
    <location>
        <begin position="243"/>
        <end position="278"/>
    </location>
</feature>
<feature type="region of interest" description="7 X 6 AA tandem repeats of K-[LP]-C-[PRS]-[PS]-[PS]">
    <location>
        <begin position="305"/>
        <end position="334"/>
    </location>
</feature>
<feature type="region of interest" description="Disordered" evidence="5">
    <location>
        <begin position="341"/>
        <end position="362"/>
    </location>
</feature>
<feature type="compositionally biased region" description="Basic and acidic residues" evidence="5">
    <location>
        <begin position="256"/>
        <end position="270"/>
    </location>
</feature>
<feature type="glycosylation site" description="N-linked (GlcNAc...) asparagine; by host" evidence="4">
    <location>
        <position position="24"/>
    </location>
</feature>
<feature type="glycosylation site" description="N-linked (GlcNAc...) asparagine; by host" evidence="4">
    <location>
        <position position="73"/>
    </location>
</feature>
<feature type="glycosylation site" description="N-linked (GlcNAc...) asparagine; by host" evidence="4">
    <location>
        <position position="77"/>
    </location>
</feature>
<feature type="glycosylation site" description="N-linked (GlcNAc...) asparagine; by host" evidence="4">
    <location>
        <position position="85"/>
    </location>
</feature>
<feature type="glycosylation site" description="N-linked (GlcNAc...) asparagine; by host" evidence="4">
    <location>
        <position position="91"/>
    </location>
</feature>
<feature type="glycosylation site" description="N-linked (GlcNAc...) asparagine; by host" evidence="4">
    <location>
        <position position="104"/>
    </location>
</feature>
<feature type="glycosylation site" description="N-linked (GlcNAc...) asparagine; by host" evidence="4">
    <location>
        <position position="121"/>
    </location>
</feature>
<feature type="glycosylation site" description="N-linked (GlcNAc...) asparagine; by host" evidence="4">
    <location>
        <position position="133"/>
    </location>
</feature>
<feature type="glycosylation site" description="N-linked (GlcNAc...) asparagine; by host" evidence="4">
    <location>
        <position position="144"/>
    </location>
</feature>
<feature type="glycosylation site" description="N-linked (GlcNAc...) asparagine; by host" evidence="4">
    <location>
        <position position="176"/>
    </location>
</feature>
<feature type="glycosylation site" description="N-linked (GlcNAc...) asparagine; by host" evidence="4">
    <location>
        <position position="183"/>
    </location>
</feature>
<feature type="glycosylation site" description="N-linked (GlcNAc...) asparagine; by host" evidence="4">
    <location>
        <position position="189"/>
    </location>
</feature>
<feature type="disulfide bond" evidence="1">
    <location>
        <begin position="122"/>
        <end position="190"/>
    </location>
</feature>
<feature type="disulfide bond" evidence="1">
    <location>
        <begin position="129"/>
        <end position="173"/>
    </location>
</feature>
<organism>
    <name type="scientific">African swine fever virus (isolate Warthog/Namibia/Wart80/1980)</name>
    <name type="common">ASFV</name>
    <dbReference type="NCBI Taxonomy" id="561444"/>
    <lineage>
        <taxon>Viruses</taxon>
        <taxon>Varidnaviria</taxon>
        <taxon>Bamfordvirae</taxon>
        <taxon>Nucleocytoviricota</taxon>
        <taxon>Pokkesviricetes</taxon>
        <taxon>Asfuvirales</taxon>
        <taxon>Asfarviridae</taxon>
        <taxon>Asfivirus</taxon>
        <taxon>African swine fever virus</taxon>
    </lineage>
</organism>
<keyword id="KW-1015">Disulfide bond</keyword>
<keyword id="KW-0325">Glycoprotein</keyword>
<keyword id="KW-1040">Host Golgi apparatus</keyword>
<keyword id="KW-1043">Host membrane</keyword>
<keyword id="KW-0426">Late protein</keyword>
<keyword id="KW-0472">Membrane</keyword>
<keyword id="KW-0675">Receptor</keyword>
<keyword id="KW-0677">Repeat</keyword>
<keyword id="KW-0732">Signal</keyword>
<keyword id="KW-0812">Transmembrane</keyword>
<keyword id="KW-1133">Transmembrane helix</keyword>
<keyword id="KW-0946">Virion</keyword>
<organismHost>
    <name type="scientific">Ornithodoros</name>
    <name type="common">relapsing fever ticks</name>
    <dbReference type="NCBI Taxonomy" id="6937"/>
</organismHost>
<organismHost>
    <name type="scientific">Phacochoerus aethiopicus</name>
    <name type="common">Warthog</name>
    <dbReference type="NCBI Taxonomy" id="85517"/>
</organismHost>
<organismHost>
    <name type="scientific">Phacochoerus africanus</name>
    <name type="common">Warthog</name>
    <dbReference type="NCBI Taxonomy" id="41426"/>
</organismHost>
<organismHost>
    <name type="scientific">Potamochoerus larvatus</name>
    <name type="common">Bushpig</name>
    <dbReference type="NCBI Taxonomy" id="273792"/>
</organismHost>
<organismHost>
    <name type="scientific">Sus scrofa</name>
    <name type="common">Pig</name>
    <dbReference type="NCBI Taxonomy" id="9823"/>
</organismHost>
<comment type="function">
    <text evidence="2 3">May play an immunosuppressive role by inhibiting lymphocyte proliferation and subsequently facilitating viral replication and generalization of infection (By similarity). Responsible for viral hemadsorption, which may help viral spread (By similarity). Increases virus replication in the tick vector at the step of virus uptake or replication in the tick gut (By similarity). May play a role in the host Golgi reorganization to yield viral factories (By similarity). May play a role in host cell penetration (By similarity).</text>
</comment>
<comment type="subunit">
    <text evidence="3">Both glycosylated and nonglycosylated forms interact (via C-terminus) with the host AP-1 complex.</text>
</comment>
<comment type="subcellular location">
    <subcellularLocation>
        <location evidence="2">Host membrane</location>
        <topology evidence="6">Single-pass type I membrane protein</topology>
    </subcellularLocation>
    <subcellularLocation>
        <location evidence="3">Virion membrane</location>
    </subcellularLocation>
    <subcellularLocation>
        <location evidence="3">Host Golgi apparatus</location>
    </subcellularLocation>
    <text evidence="2 3">Localizes around the cytoplasmic viral factories which are probably derived from the host Golgi membrane (By similarity). Both proteolytic fragments localize to membrane compartements (By similarity). A minor fraction localizes on the host plasma membrane and on the outer viral envelope of budding particles (By similarity).</text>
</comment>
<comment type="induction">
    <text evidence="6">Expressed in the late phase of the viral replicative cycle.</text>
</comment>
<comment type="domain">
    <text evidence="3">The C-terminus contains repetitive amino-acids that may function as a cell-penetrating peptide.</text>
</comment>
<comment type="PTM">
    <text evidence="2">Cleaved into two fragments of 63 kDa and 26 kDa containing respectively the glycosylated N-terminus and the nonglycosylated C-terminus (By similarity). A full-length 89-kDa glycosylated form also exists (By similarity).</text>
</comment>
<comment type="similarity">
    <text evidence="6">Belongs to the asfivirus CD2 homolog protein family.</text>
</comment>
<protein>
    <recommendedName>
        <fullName>CD2 homolog</fullName>
        <shortName>CD2H</shortName>
    </recommendedName>
    <alternativeName>
        <fullName>5HL</fullName>
    </alternativeName>
    <alternativeName>
        <fullName>CD2v</fullName>
    </alternativeName>
    <alternativeName>
        <fullName>T-lymphocyte CD2 receptor-like protein</fullName>
    </alternativeName>
    <alternativeName>
        <fullName evidence="3">pEP402R</fullName>
    </alternativeName>
</protein>
<sequence>MIIKLIFLICFKIVLSINYWVRYNDTVTLNSNINSETEGIFWNFYNNTFNTIATCGKKNNVCECSNYDKSLYNITNNCSLTIFPNNTKIFNTTYQLVYSRNRINYTINLLLPVTSPIITYNCTQSLITCEKTNGTNIHLFLNLNDTINEYTNKSFLNYYWNSSELNNIFLATCIINNTLNSANTTKVINCTNPLLKSYQNYFLENIHTLFYMIIFIVSGITISIFISIITFLSLRKRKKHVEEIESPPPESNEEEQCQHDDTTSIHEPSPREPLLPKPYSRYQYNTPIYYMRPSTQPLNPFPLPKPCPPPKPCPPPKPCPPPKPCPPPKPCPPPKPCPPPKPCPPPESYSPPKPLPSIPLLPNIPPLSTQNISLIHVDRII</sequence>
<name>CD2H_ASFWA</name>
<proteinExistence type="inferred from homology"/>
<dbReference type="EMBL" id="AY261366">
    <property type="status" value="NOT_ANNOTATED_CDS"/>
    <property type="molecule type" value="Genomic_DNA"/>
</dbReference>
<dbReference type="SMR" id="P0C9V6"/>
<dbReference type="Proteomes" id="UP000000858">
    <property type="component" value="Segment"/>
</dbReference>
<dbReference type="GO" id="GO:0044177">
    <property type="term" value="C:host cell Golgi apparatus"/>
    <property type="evidence" value="ECO:0007669"/>
    <property type="project" value="UniProtKB-SubCell"/>
</dbReference>
<dbReference type="GO" id="GO:0033644">
    <property type="term" value="C:host cell membrane"/>
    <property type="evidence" value="ECO:0007669"/>
    <property type="project" value="UniProtKB-SubCell"/>
</dbReference>
<dbReference type="GO" id="GO:0016020">
    <property type="term" value="C:membrane"/>
    <property type="evidence" value="ECO:0007669"/>
    <property type="project" value="UniProtKB-KW"/>
</dbReference>
<dbReference type="GO" id="GO:0055036">
    <property type="term" value="C:virion membrane"/>
    <property type="evidence" value="ECO:0007669"/>
    <property type="project" value="UniProtKB-SubCell"/>
</dbReference>
<dbReference type="Gene3D" id="2.60.40.10">
    <property type="entry name" value="Immunoglobulins"/>
    <property type="match status" value="1"/>
</dbReference>
<dbReference type="Gene3D" id="2.160.20.50">
    <property type="entry name" value="Insect antifreeze protein"/>
    <property type="match status" value="1"/>
</dbReference>
<dbReference type="InterPro" id="IPR036179">
    <property type="entry name" value="Ig-like_dom_sf"/>
</dbReference>
<dbReference type="InterPro" id="IPR013783">
    <property type="entry name" value="Ig-like_fold"/>
</dbReference>
<dbReference type="PRINTS" id="PR01217">
    <property type="entry name" value="PRICHEXTENSN"/>
</dbReference>
<dbReference type="SUPFAM" id="SSF48726">
    <property type="entry name" value="Immunoglobulin"/>
    <property type="match status" value="1"/>
</dbReference>